<comment type="subcellular location">
    <subcellularLocation>
        <location>Membrane</location>
        <topology>Multi-pass membrane protein</topology>
    </subcellularLocation>
</comment>
<comment type="similarity">
    <text evidence="3">Belongs to the ThrE exporter (TC 2.A.79) family.</text>
</comment>
<accession>C5E109</accession>
<organism>
    <name type="scientific">Zygosaccharomyces rouxii (strain ATCC 2623 / CBS 732 / NBRC 1130 / NCYC 568 / NRRL Y-229)</name>
    <dbReference type="NCBI Taxonomy" id="559307"/>
    <lineage>
        <taxon>Eukaryota</taxon>
        <taxon>Fungi</taxon>
        <taxon>Dikarya</taxon>
        <taxon>Ascomycota</taxon>
        <taxon>Saccharomycotina</taxon>
        <taxon>Saccharomycetes</taxon>
        <taxon>Saccharomycetales</taxon>
        <taxon>Saccharomycetaceae</taxon>
        <taxon>Zygosaccharomyces</taxon>
    </lineage>
</organism>
<protein>
    <recommendedName>
        <fullName>Pheromone-regulated membrane protein 10</fullName>
    </recommendedName>
</protein>
<reference key="1">
    <citation type="journal article" date="2009" name="Genome Res.">
        <title>Comparative genomics of protoploid Saccharomycetaceae.</title>
        <authorList>
            <consortium name="The Genolevures Consortium"/>
            <person name="Souciet J.-L."/>
            <person name="Dujon B."/>
            <person name="Gaillardin C."/>
            <person name="Johnston M."/>
            <person name="Baret P.V."/>
            <person name="Cliften P."/>
            <person name="Sherman D.J."/>
            <person name="Weissenbach J."/>
            <person name="Westhof E."/>
            <person name="Wincker P."/>
            <person name="Jubin C."/>
            <person name="Poulain J."/>
            <person name="Barbe V."/>
            <person name="Segurens B."/>
            <person name="Artiguenave F."/>
            <person name="Anthouard V."/>
            <person name="Vacherie B."/>
            <person name="Val M.-E."/>
            <person name="Fulton R.S."/>
            <person name="Minx P."/>
            <person name="Wilson R."/>
            <person name="Durrens P."/>
            <person name="Jean G."/>
            <person name="Marck C."/>
            <person name="Martin T."/>
            <person name="Nikolski M."/>
            <person name="Rolland T."/>
            <person name="Seret M.-L."/>
            <person name="Casaregola S."/>
            <person name="Despons L."/>
            <person name="Fairhead C."/>
            <person name="Fischer G."/>
            <person name="Lafontaine I."/>
            <person name="Leh V."/>
            <person name="Lemaire M."/>
            <person name="de Montigny J."/>
            <person name="Neuveglise C."/>
            <person name="Thierry A."/>
            <person name="Blanc-Lenfle I."/>
            <person name="Bleykasten C."/>
            <person name="Diffels J."/>
            <person name="Fritsch E."/>
            <person name="Frangeul L."/>
            <person name="Goeffon A."/>
            <person name="Jauniaux N."/>
            <person name="Kachouri-Lafond R."/>
            <person name="Payen C."/>
            <person name="Potier S."/>
            <person name="Pribylova L."/>
            <person name="Ozanne C."/>
            <person name="Richard G.-F."/>
            <person name="Sacerdot C."/>
            <person name="Straub M.-L."/>
            <person name="Talla E."/>
        </authorList>
    </citation>
    <scope>NUCLEOTIDE SEQUENCE [LARGE SCALE GENOMIC DNA]</scope>
    <source>
        <strain>ATCC 2623 / CBS 732 / BCRC 21506 / NBRC 1130 / NCYC 568 / NRRL Y-229</strain>
    </source>
</reference>
<gene>
    <name type="ordered locus">ZYRO0G17116g</name>
</gene>
<keyword id="KW-0472">Membrane</keyword>
<keyword id="KW-1185">Reference proteome</keyword>
<keyword id="KW-0812">Transmembrane</keyword>
<keyword id="KW-1133">Transmembrane helix</keyword>
<evidence type="ECO:0000255" key="1"/>
<evidence type="ECO:0000256" key="2">
    <source>
        <dbReference type="SAM" id="MobiDB-lite"/>
    </source>
</evidence>
<evidence type="ECO:0000305" key="3"/>
<dbReference type="EMBL" id="CU928179">
    <property type="protein sequence ID" value="CAR29793.1"/>
    <property type="molecule type" value="Genomic_DNA"/>
</dbReference>
<dbReference type="RefSeq" id="XP_002498726.1">
    <property type="nucleotide sequence ID" value="XM_002498681.1"/>
</dbReference>
<dbReference type="GeneID" id="8206553"/>
<dbReference type="KEGG" id="zro:ZYRO0G17116g"/>
<dbReference type="HOGENOM" id="CLU_007078_1_1_1"/>
<dbReference type="InParanoid" id="C5E109"/>
<dbReference type="Proteomes" id="UP000008536">
    <property type="component" value="Chromosome G"/>
</dbReference>
<dbReference type="GO" id="GO:0016020">
    <property type="term" value="C:membrane"/>
    <property type="evidence" value="ECO:0007669"/>
    <property type="project" value="UniProtKB-SubCell"/>
</dbReference>
<dbReference type="GO" id="GO:0022857">
    <property type="term" value="F:transmembrane transporter activity"/>
    <property type="evidence" value="ECO:0007669"/>
    <property type="project" value="InterPro"/>
</dbReference>
<dbReference type="InterPro" id="IPR010619">
    <property type="entry name" value="ThrE-like_N"/>
</dbReference>
<dbReference type="InterPro" id="IPR051361">
    <property type="entry name" value="ThrE/Ser_Exporter"/>
</dbReference>
<dbReference type="InterPro" id="IPR024528">
    <property type="entry name" value="ThrE_2"/>
</dbReference>
<dbReference type="PANTHER" id="PTHR31082">
    <property type="entry name" value="PHEROMONE-REGULATED MEMBRANE PROTEIN 10"/>
    <property type="match status" value="1"/>
</dbReference>
<dbReference type="PANTHER" id="PTHR31082:SF4">
    <property type="entry name" value="PHEROMONE-REGULATED MEMBRANE PROTEIN 10"/>
    <property type="match status" value="1"/>
</dbReference>
<dbReference type="Pfam" id="PF06738">
    <property type="entry name" value="ThrE"/>
    <property type="match status" value="1"/>
</dbReference>
<dbReference type="Pfam" id="PF12821">
    <property type="entry name" value="ThrE_2"/>
    <property type="match status" value="1"/>
</dbReference>
<feature type="chain" id="PRO_0000409258" description="Pheromone-regulated membrane protein 10">
    <location>
        <begin position="1"/>
        <end position="979"/>
    </location>
</feature>
<feature type="transmembrane region" description="Helical" evidence="1">
    <location>
        <begin position="658"/>
        <end position="678"/>
    </location>
</feature>
<feature type="transmembrane region" description="Helical" evidence="1">
    <location>
        <begin position="680"/>
        <end position="700"/>
    </location>
</feature>
<feature type="transmembrane region" description="Helical" evidence="1">
    <location>
        <begin position="710"/>
        <end position="730"/>
    </location>
</feature>
<feature type="transmembrane region" description="Helical" evidence="1">
    <location>
        <begin position="734"/>
        <end position="754"/>
    </location>
</feature>
<feature type="transmembrane region" description="Helical" evidence="1">
    <location>
        <begin position="773"/>
        <end position="793"/>
    </location>
</feature>
<feature type="transmembrane region" description="Helical" evidence="1">
    <location>
        <begin position="809"/>
        <end position="829"/>
    </location>
</feature>
<feature type="transmembrane region" description="Helical" evidence="1">
    <location>
        <begin position="832"/>
        <end position="852"/>
    </location>
</feature>
<feature type="transmembrane region" description="Helical" evidence="1">
    <location>
        <begin position="864"/>
        <end position="884"/>
    </location>
</feature>
<feature type="transmembrane region" description="Helical" evidence="1">
    <location>
        <begin position="886"/>
        <end position="906"/>
    </location>
</feature>
<feature type="transmembrane region" description="Helical" evidence="1">
    <location>
        <begin position="946"/>
        <end position="966"/>
    </location>
</feature>
<feature type="region of interest" description="Disordered" evidence="2">
    <location>
        <begin position="1"/>
        <end position="279"/>
    </location>
</feature>
<feature type="region of interest" description="Disordered" evidence="2">
    <location>
        <begin position="295"/>
        <end position="318"/>
    </location>
</feature>
<feature type="region of interest" description="Disordered" evidence="2">
    <location>
        <begin position="337"/>
        <end position="411"/>
    </location>
</feature>
<feature type="region of interest" description="Disordered" evidence="2">
    <location>
        <begin position="432"/>
        <end position="451"/>
    </location>
</feature>
<feature type="region of interest" description="Disordered" evidence="2">
    <location>
        <begin position="491"/>
        <end position="528"/>
    </location>
</feature>
<feature type="compositionally biased region" description="Basic and acidic residues" evidence="2">
    <location>
        <begin position="15"/>
        <end position="26"/>
    </location>
</feature>
<feature type="compositionally biased region" description="Low complexity" evidence="2">
    <location>
        <begin position="29"/>
        <end position="38"/>
    </location>
</feature>
<feature type="compositionally biased region" description="Acidic residues" evidence="2">
    <location>
        <begin position="54"/>
        <end position="68"/>
    </location>
</feature>
<feature type="compositionally biased region" description="Polar residues" evidence="2">
    <location>
        <begin position="77"/>
        <end position="86"/>
    </location>
</feature>
<feature type="compositionally biased region" description="Basic and acidic residues" evidence="2">
    <location>
        <begin position="105"/>
        <end position="115"/>
    </location>
</feature>
<feature type="compositionally biased region" description="Acidic residues" evidence="2">
    <location>
        <begin position="122"/>
        <end position="135"/>
    </location>
</feature>
<feature type="compositionally biased region" description="Basic and acidic residues" evidence="2">
    <location>
        <begin position="138"/>
        <end position="148"/>
    </location>
</feature>
<feature type="compositionally biased region" description="Basic and acidic residues" evidence="2">
    <location>
        <begin position="158"/>
        <end position="175"/>
    </location>
</feature>
<feature type="compositionally biased region" description="Polar residues" evidence="2">
    <location>
        <begin position="192"/>
        <end position="213"/>
    </location>
</feature>
<feature type="compositionally biased region" description="Basic and acidic residues" evidence="2">
    <location>
        <begin position="253"/>
        <end position="263"/>
    </location>
</feature>
<feature type="compositionally biased region" description="Low complexity" evidence="2">
    <location>
        <begin position="360"/>
        <end position="372"/>
    </location>
</feature>
<feature type="compositionally biased region" description="Acidic residues" evidence="2">
    <location>
        <begin position="379"/>
        <end position="395"/>
    </location>
</feature>
<feature type="compositionally biased region" description="Polar residues" evidence="2">
    <location>
        <begin position="503"/>
        <end position="515"/>
    </location>
</feature>
<feature type="compositionally biased region" description="Basic residues" evidence="2">
    <location>
        <begin position="516"/>
        <end position="528"/>
    </location>
</feature>
<sequence>MGKSDHLKLFGKKSGGKDARSPETRSRNSRSSTDNRSSIGNNGSDNPLARLSDLDLEEGVDDDADFDWDTLPLPPSDAQSLDNPFNSGEALPSFRRRGGPTSNDAIERDAVDTIRDTSGAYEEPDSASDGEDVGMNDEYQRKRERLVDVNDSASEVSSPRRESREGKNVRFHTETDDINPEDPIAAPAANTEAGTGTNENGEASSSGMKSSINVDDEEGSETSSSNNENKLDHFKKFFRRGSVQNKPDGGEDGAEKGMKSMKDDDNDDEKEGGGGFFSKVIQNIKDANNGLAPGLRNVNLHPEADPEKNSVQEAEVDGDDIQLVDFNSVAKGLVKNYSSLPQSAHHQKEPAILEGDTMYSPSTPSSSPGPESFVAAPMDDYDFDQVDSDGEDSDLDPFVGAQTYVPPPQRVRGGVLGSLLKMYQNEDVSDSFSTASSIGEEPAKPSKPLLDPHFSKGKIPTAGSLLHVPSSAASHLKKNAQQLAGGAHNLATKHYPGRKNEEASGSNSELPSFKNTRPKKNKKHLPKFKKKMAAEAKITVHIADLLQRHRFILRMCKGLMMYGAPTHRLEEYMIMTSRVLEIDGQFLYLPGCMIVSFGDATTRTSEVQLVRCAQGLNLWKLHQVHSIYKQVVHDTMSASEGNILMDKVLQDRNLVPSWVCVLLYGFCSAMVTPYAFGGDWVNLAVSFFIGTCVGALQFIVSARSNMYSNVFEISASIVVSFVGRAFGSIGGSKICFGAVTQGSLALILPGYIILCGALELQSRNLVAGSVRMFYAIIYSLFLSFGITLGAALFGWMYKNATNETNCPYPISPWYRFLFVPAFTIGISLINQAHWIQLPVMVTISCTGYVVTYYSGKHFKNSTEFTASLAAFVIGIMGNLYSRVWKGLAVSAMLPAIFVQVPSGVASQSSLLSGLQSANELIKTNSTKGGDAMPGASDLSGSLSFGITMIQVSIGITVGLFGSSLIVYPFGKKSTGLFSL</sequence>
<proteinExistence type="inferred from homology"/>
<name>PRM10_ZYGRC</name>